<protein>
    <recommendedName>
        <fullName>Iron(3+)-hydroxamate-binding protein YxeB</fullName>
    </recommendedName>
    <alternativeName>
        <fullName>Ferric hydroxamate uptake protein YxeB</fullName>
    </alternativeName>
    <alternativeName>
        <fullName>Iron(III)-hydroxamate-binding protein YxeB</fullName>
    </alternativeName>
</protein>
<organism>
    <name type="scientific">Bacillus subtilis (strain 168)</name>
    <dbReference type="NCBI Taxonomy" id="224308"/>
    <lineage>
        <taxon>Bacteria</taxon>
        <taxon>Bacillati</taxon>
        <taxon>Bacillota</taxon>
        <taxon>Bacilli</taxon>
        <taxon>Bacillales</taxon>
        <taxon>Bacillaceae</taxon>
        <taxon>Bacillus</taxon>
    </lineage>
</organism>
<reference key="1">
    <citation type="journal article" date="1995" name="DNA Res.">
        <title>Cloning and sequencing of a 23-kb region of the Bacillus subtilis genome between the iol and hut operons.</title>
        <authorList>
            <person name="Yoshida K."/>
            <person name="Fujimyra M."/>
            <person name="Yanai N."/>
            <person name="Fujita Y."/>
        </authorList>
    </citation>
    <scope>NUCLEOTIDE SEQUENCE [GENOMIC DNA]</scope>
    <source>
        <strain>168 / BGSC1A1</strain>
    </source>
</reference>
<reference key="2">
    <citation type="journal article" date="1997" name="Nature">
        <title>The complete genome sequence of the Gram-positive bacterium Bacillus subtilis.</title>
        <authorList>
            <person name="Kunst F."/>
            <person name="Ogasawara N."/>
            <person name="Moszer I."/>
            <person name="Albertini A.M."/>
            <person name="Alloni G."/>
            <person name="Azevedo V."/>
            <person name="Bertero M.G."/>
            <person name="Bessieres P."/>
            <person name="Bolotin A."/>
            <person name="Borchert S."/>
            <person name="Borriss R."/>
            <person name="Boursier L."/>
            <person name="Brans A."/>
            <person name="Braun M."/>
            <person name="Brignell S.C."/>
            <person name="Bron S."/>
            <person name="Brouillet S."/>
            <person name="Bruschi C.V."/>
            <person name="Caldwell B."/>
            <person name="Capuano V."/>
            <person name="Carter N.M."/>
            <person name="Choi S.-K."/>
            <person name="Codani J.-J."/>
            <person name="Connerton I.F."/>
            <person name="Cummings N.J."/>
            <person name="Daniel R.A."/>
            <person name="Denizot F."/>
            <person name="Devine K.M."/>
            <person name="Duesterhoeft A."/>
            <person name="Ehrlich S.D."/>
            <person name="Emmerson P.T."/>
            <person name="Entian K.-D."/>
            <person name="Errington J."/>
            <person name="Fabret C."/>
            <person name="Ferrari E."/>
            <person name="Foulger D."/>
            <person name="Fritz C."/>
            <person name="Fujita M."/>
            <person name="Fujita Y."/>
            <person name="Fuma S."/>
            <person name="Galizzi A."/>
            <person name="Galleron N."/>
            <person name="Ghim S.-Y."/>
            <person name="Glaser P."/>
            <person name="Goffeau A."/>
            <person name="Golightly E.J."/>
            <person name="Grandi G."/>
            <person name="Guiseppi G."/>
            <person name="Guy B.J."/>
            <person name="Haga K."/>
            <person name="Haiech J."/>
            <person name="Harwood C.R."/>
            <person name="Henaut A."/>
            <person name="Hilbert H."/>
            <person name="Holsappel S."/>
            <person name="Hosono S."/>
            <person name="Hullo M.-F."/>
            <person name="Itaya M."/>
            <person name="Jones L.-M."/>
            <person name="Joris B."/>
            <person name="Karamata D."/>
            <person name="Kasahara Y."/>
            <person name="Klaerr-Blanchard M."/>
            <person name="Klein C."/>
            <person name="Kobayashi Y."/>
            <person name="Koetter P."/>
            <person name="Koningstein G."/>
            <person name="Krogh S."/>
            <person name="Kumano M."/>
            <person name="Kurita K."/>
            <person name="Lapidus A."/>
            <person name="Lardinois S."/>
            <person name="Lauber J."/>
            <person name="Lazarevic V."/>
            <person name="Lee S.-M."/>
            <person name="Levine A."/>
            <person name="Liu H."/>
            <person name="Masuda S."/>
            <person name="Mauel C."/>
            <person name="Medigue C."/>
            <person name="Medina N."/>
            <person name="Mellado R.P."/>
            <person name="Mizuno M."/>
            <person name="Moestl D."/>
            <person name="Nakai S."/>
            <person name="Noback M."/>
            <person name="Noone D."/>
            <person name="O'Reilly M."/>
            <person name="Ogawa K."/>
            <person name="Ogiwara A."/>
            <person name="Oudega B."/>
            <person name="Park S.-H."/>
            <person name="Parro V."/>
            <person name="Pohl T.M."/>
            <person name="Portetelle D."/>
            <person name="Porwollik S."/>
            <person name="Prescott A.M."/>
            <person name="Presecan E."/>
            <person name="Pujic P."/>
            <person name="Purnelle B."/>
            <person name="Rapoport G."/>
            <person name="Rey M."/>
            <person name="Reynolds S."/>
            <person name="Rieger M."/>
            <person name="Rivolta C."/>
            <person name="Rocha E."/>
            <person name="Roche B."/>
            <person name="Rose M."/>
            <person name="Sadaie Y."/>
            <person name="Sato T."/>
            <person name="Scanlan E."/>
            <person name="Schleich S."/>
            <person name="Schroeter R."/>
            <person name="Scoffone F."/>
            <person name="Sekiguchi J."/>
            <person name="Sekowska A."/>
            <person name="Seror S.J."/>
            <person name="Serror P."/>
            <person name="Shin B.-S."/>
            <person name="Soldo B."/>
            <person name="Sorokin A."/>
            <person name="Tacconi E."/>
            <person name="Takagi T."/>
            <person name="Takahashi H."/>
            <person name="Takemaru K."/>
            <person name="Takeuchi M."/>
            <person name="Tamakoshi A."/>
            <person name="Tanaka T."/>
            <person name="Terpstra P."/>
            <person name="Tognoni A."/>
            <person name="Tosato V."/>
            <person name="Uchiyama S."/>
            <person name="Vandenbol M."/>
            <person name="Vannier F."/>
            <person name="Vassarotti A."/>
            <person name="Viari A."/>
            <person name="Wambutt R."/>
            <person name="Wedler E."/>
            <person name="Wedler H."/>
            <person name="Weitzenegger T."/>
            <person name="Winters P."/>
            <person name="Wipat A."/>
            <person name="Yamamoto H."/>
            <person name="Yamane K."/>
            <person name="Yasumoto K."/>
            <person name="Yata K."/>
            <person name="Yoshida K."/>
            <person name="Yoshikawa H.-F."/>
            <person name="Zumstein E."/>
            <person name="Yoshikawa H."/>
            <person name="Danchin A."/>
        </authorList>
    </citation>
    <scope>NUCLEOTIDE SEQUENCE [LARGE SCALE GENOMIC DNA]</scope>
    <source>
        <strain>168</strain>
    </source>
</reference>
<reference key="3">
    <citation type="journal article" date="2009" name="Microbiology">
        <title>From a consortium sequence to a unified sequence: the Bacillus subtilis 168 reference genome a decade later.</title>
        <authorList>
            <person name="Barbe V."/>
            <person name="Cruveiller S."/>
            <person name="Kunst F."/>
            <person name="Lenoble P."/>
            <person name="Meurice G."/>
            <person name="Sekowska A."/>
            <person name="Vallenet D."/>
            <person name="Wang T."/>
            <person name="Moszer I."/>
            <person name="Medigue C."/>
            <person name="Danchin A."/>
        </authorList>
    </citation>
    <scope>SEQUENCE REVISION TO C-TERMINUS</scope>
</reference>
<reference key="4">
    <citation type="journal article" date="2006" name="J. Bacteriol.">
        <title>Role of the Fur regulon in iron transport in Bacillus subtilis.</title>
        <authorList>
            <person name="Ollinger J."/>
            <person name="Song K.-B."/>
            <person name="Antelmann H."/>
            <person name="Hecker M."/>
            <person name="Helmann J.D."/>
        </authorList>
    </citation>
    <scope>FUNCTION IN DESFERRIOXAMINE TRANSPORT</scope>
    <source>
        <strain>168 / CU1065</strain>
    </source>
</reference>
<reference key="5">
    <citation type="journal article" date="2010" name="Genes Dev.">
        <title>Functional microdomains in bacterial membranes.</title>
        <authorList>
            <person name="Lopez D."/>
            <person name="Kolter R."/>
        </authorList>
    </citation>
    <scope>SUBCELLULAR LOCATION</scope>
    <source>
        <strain>168 / Marburg / ATCC 6051 / DSM 10 / JCM 1465 / NBRC 13719 / NCIMB 3610 / NRRL NRS-744 / VKM B-501</strain>
    </source>
</reference>
<reference key="6">
    <citation type="journal article" date="2012" name="Mol. Microbiol.">
        <title>The biofilm formation defect of a Bacillus subtilis flotillin-defective mutant involves the protease FtsH.</title>
        <authorList>
            <person name="Yepes A."/>
            <person name="Schneider J."/>
            <person name="Mielich B."/>
            <person name="Koch G."/>
            <person name="Garcia-Betancur J.C."/>
            <person name="Ramamurthi K.S."/>
            <person name="Vlamakis H."/>
            <person name="Lopez D."/>
        </authorList>
    </citation>
    <scope>SUBCELLULAR LOCATION</scope>
    <source>
        <strain>168 / Marburg / ATCC 6051 / DSM 10 / JCM 1465 / NBRC 13719 / NCIMB 3610 / NRRL NRS-744 / VKM B-501</strain>
    </source>
</reference>
<accession>P54941</accession>
<feature type="signal peptide" evidence="7">
    <location>
        <begin position="1"/>
        <end position="20"/>
    </location>
</feature>
<feature type="chain" id="PRO_0000031825" description="Iron(3+)-hydroxamate-binding protein YxeB">
    <location>
        <begin position="21"/>
        <end position="321"/>
    </location>
</feature>
<feature type="domain" description="Fe/B12 periplasmic-binding" evidence="2">
    <location>
        <begin position="58"/>
        <end position="316"/>
    </location>
</feature>
<feature type="region of interest" description="Disordered" evidence="3">
    <location>
        <begin position="24"/>
        <end position="48"/>
    </location>
</feature>
<feature type="compositionally biased region" description="Low complexity" evidence="3">
    <location>
        <begin position="24"/>
        <end position="33"/>
    </location>
</feature>
<feature type="lipid moiety-binding region" description="N-palmitoyl cysteine" evidence="7">
    <location>
        <position position="21"/>
    </location>
</feature>
<feature type="lipid moiety-binding region" description="S-diacylglycerol cysteine" evidence="7">
    <location>
        <position position="21"/>
    </location>
</feature>
<feature type="sequence conflict" description="In Ref. 1; BAA08318." evidence="7" ref="1">
    <location>
        <begin position="320"/>
        <end position="321"/>
    </location>
</feature>
<name>YXEB_BACSU</name>
<comment type="function">
    <text evidence="4">Part of the ABC transporter complex FhuCBGD involved in iron(3+)-hydroxamate import. Binds the iron(3+)-hydroxamate complex and transfers it to the membrane-bound permease. Partially required for the transport of desferrioxamine.</text>
</comment>
<comment type="subunit">
    <text evidence="1">The complex is composed of an ATP-binding protein (FhuC), two transmembrane proteins (FhuB and FhuG) and a solute-binding protein (FhuD or YxeB).</text>
</comment>
<comment type="subcellular location">
    <subcellularLocation>
        <location evidence="5 6">Cell membrane</location>
        <topology evidence="7">Lipid-anchor</topology>
    </subcellularLocation>
    <subcellularLocation>
        <location evidence="5 6">Membrane raft</location>
        <topology evidence="7">Peripheral membrane protein</topology>
    </subcellularLocation>
    <text evidence="5 6">Present in detergent-resistant membrane (DRM) fractions that may be equivalent to eukaryotic membrane rafts; these rafts include proteins involved in signaling, molecule trafficking and protein secretion.</text>
</comment>
<comment type="similarity">
    <text evidence="7">Belongs to the bacterial solute-binding protein 8 family.</text>
</comment>
<gene>
    <name type="primary">yxeB</name>
    <name type="ordered locus">BSU39610</name>
    <name type="ORF">HS74BR</name>
</gene>
<proteinExistence type="evidence at protein level"/>
<evidence type="ECO:0000250" key="1"/>
<evidence type="ECO:0000255" key="2">
    <source>
        <dbReference type="PROSITE-ProRule" id="PRU00344"/>
    </source>
</evidence>
<evidence type="ECO:0000256" key="3">
    <source>
        <dbReference type="SAM" id="MobiDB-lite"/>
    </source>
</evidence>
<evidence type="ECO:0000269" key="4">
    <source>
    </source>
</evidence>
<evidence type="ECO:0000269" key="5">
    <source>
    </source>
</evidence>
<evidence type="ECO:0000269" key="6">
    <source>
    </source>
</evidence>
<evidence type="ECO:0000305" key="7"/>
<dbReference type="EMBL" id="D45912">
    <property type="protein sequence ID" value="BAA08318.1"/>
    <property type="molecule type" value="Genomic_DNA"/>
</dbReference>
<dbReference type="EMBL" id="AL009126">
    <property type="protein sequence ID" value="CAB15997.2"/>
    <property type="molecule type" value="Genomic_DNA"/>
</dbReference>
<dbReference type="PIR" id="D70074">
    <property type="entry name" value="D70074"/>
</dbReference>
<dbReference type="RefSeq" id="WP_003243725.1">
    <property type="nucleotide sequence ID" value="NZ_OZ025638.1"/>
</dbReference>
<dbReference type="SMR" id="P54941"/>
<dbReference type="FunCoup" id="P54941">
    <property type="interactions" value="30"/>
</dbReference>
<dbReference type="STRING" id="224308.BSU39610"/>
<dbReference type="jPOST" id="P54941"/>
<dbReference type="PaxDb" id="224308-BSU39610"/>
<dbReference type="EnsemblBacteria" id="CAB15997">
    <property type="protein sequence ID" value="CAB15997"/>
    <property type="gene ID" value="BSU_39610"/>
</dbReference>
<dbReference type="GeneID" id="937581"/>
<dbReference type="KEGG" id="bsu:BSU39610"/>
<dbReference type="PATRIC" id="fig|224308.179.peg.4286"/>
<dbReference type="eggNOG" id="COG0614">
    <property type="taxonomic scope" value="Bacteria"/>
</dbReference>
<dbReference type="InParanoid" id="P54941"/>
<dbReference type="OrthoDB" id="2241086at2"/>
<dbReference type="PhylomeDB" id="P54941"/>
<dbReference type="BioCyc" id="BSUB:BSU39610-MONOMER"/>
<dbReference type="Proteomes" id="UP000001570">
    <property type="component" value="Chromosome"/>
</dbReference>
<dbReference type="GO" id="GO:0045121">
    <property type="term" value="C:membrane raft"/>
    <property type="evidence" value="ECO:0007669"/>
    <property type="project" value="UniProtKB-SubCell"/>
</dbReference>
<dbReference type="GO" id="GO:0030288">
    <property type="term" value="C:outer membrane-bounded periplasmic space"/>
    <property type="evidence" value="ECO:0000318"/>
    <property type="project" value="GO_Central"/>
</dbReference>
<dbReference type="GO" id="GO:0005886">
    <property type="term" value="C:plasma membrane"/>
    <property type="evidence" value="ECO:0007669"/>
    <property type="project" value="UniProtKB-SubCell"/>
</dbReference>
<dbReference type="GO" id="GO:1901678">
    <property type="term" value="P:iron coordination entity transport"/>
    <property type="evidence" value="ECO:0007669"/>
    <property type="project" value="UniProtKB-ARBA"/>
</dbReference>
<dbReference type="CDD" id="cd01138">
    <property type="entry name" value="FeuA"/>
    <property type="match status" value="1"/>
</dbReference>
<dbReference type="FunFam" id="3.40.50.1980:FF:000017">
    <property type="entry name" value="ABC transporter substrate-binding protein"/>
    <property type="match status" value="1"/>
</dbReference>
<dbReference type="Gene3D" id="3.40.50.1980">
    <property type="entry name" value="Nitrogenase molybdenum iron protein domain"/>
    <property type="match status" value="2"/>
</dbReference>
<dbReference type="InterPro" id="IPR002491">
    <property type="entry name" value="ABC_transptr_periplasmic_BD"/>
</dbReference>
<dbReference type="InterPro" id="IPR051313">
    <property type="entry name" value="Bact_iron-sidero_bind"/>
</dbReference>
<dbReference type="PANTHER" id="PTHR30532">
    <property type="entry name" value="IRON III DICITRATE-BINDING PERIPLASMIC PROTEIN"/>
    <property type="match status" value="1"/>
</dbReference>
<dbReference type="PANTHER" id="PTHR30532:SF26">
    <property type="entry name" value="IRON(3+)-HYDROXAMATE-BINDING PROTEIN FHUD"/>
    <property type="match status" value="1"/>
</dbReference>
<dbReference type="Pfam" id="PF01497">
    <property type="entry name" value="Peripla_BP_2"/>
    <property type="match status" value="1"/>
</dbReference>
<dbReference type="SUPFAM" id="SSF53807">
    <property type="entry name" value="Helical backbone' metal receptor"/>
    <property type="match status" value="1"/>
</dbReference>
<dbReference type="PROSITE" id="PS50983">
    <property type="entry name" value="FE_B12_PBP"/>
    <property type="match status" value="1"/>
</dbReference>
<dbReference type="PROSITE" id="PS51257">
    <property type="entry name" value="PROKAR_LIPOPROTEIN"/>
    <property type="match status" value="1"/>
</dbReference>
<keyword id="KW-1003">Cell membrane</keyword>
<keyword id="KW-0406">Ion transport</keyword>
<keyword id="KW-0408">Iron</keyword>
<keyword id="KW-0410">Iron transport</keyword>
<keyword id="KW-0449">Lipoprotein</keyword>
<keyword id="KW-0472">Membrane</keyword>
<keyword id="KW-0564">Palmitate</keyword>
<keyword id="KW-1185">Reference proteome</keyword>
<keyword id="KW-0732">Signal</keyword>
<keyword id="KW-0813">Transport</keyword>
<sequence length="321" mass="35507">MKKNILLVGMLVLLLMFVSACSGTASKGSSSDSASEKTEMRTYKSPKGNVNIPAHPKRIVTDFYAGELLSVGANVVGSGSWSFDNPFLKSKLKNVKDVGDPISVEKVMELQPDLIVVMNEENVDKLKKIAPTVVIPYNTAKNVEDTVSMFGDIAGAKDQAKSFMADFNKKAEAAKKKIAGVIDKDATFGIYENTDKGEFWVFNDNGGRGGQAVYNALGLKAPEKIEQDVIKKGEMKQLSQEVIPEYAADYMFITDYNPKGESKTLDKLENSSIWKNLDAVKHNRVFINDFDSFYPYDPISVSKQVDIITDMLIKRAEENKK</sequence>